<dbReference type="EMBL" id="CP000026">
    <property type="protein sequence ID" value="AAV76049.1"/>
    <property type="molecule type" value="Genomic_DNA"/>
</dbReference>
<dbReference type="RefSeq" id="WP_001258093.1">
    <property type="nucleotide sequence ID" value="NC_006511.1"/>
</dbReference>
<dbReference type="KEGG" id="spt:SPA0011"/>
<dbReference type="HOGENOM" id="CLU_158661_0_0_6"/>
<dbReference type="Proteomes" id="UP000008185">
    <property type="component" value="Chromosome"/>
</dbReference>
<dbReference type="HAMAP" id="MF_01372">
    <property type="entry name" value="UPF0412"/>
    <property type="match status" value="1"/>
</dbReference>
<dbReference type="InterPro" id="IPR020240">
    <property type="entry name" value="UPF0412_YaaI"/>
</dbReference>
<dbReference type="NCBIfam" id="NF007541">
    <property type="entry name" value="PRK10154.1"/>
    <property type="match status" value="1"/>
</dbReference>
<dbReference type="Pfam" id="PF10807">
    <property type="entry name" value="DUF2541"/>
    <property type="match status" value="1"/>
</dbReference>
<protein>
    <recommendedName>
        <fullName evidence="1">UPF0412 protein YaaI</fullName>
    </recommendedName>
</protein>
<sequence>MRSVLTISVGLLFGLALSSVAHANDHKILGVIAMPRNETNDLALKIPVCRIVKRIQLTADHGDIELSGASVYFKTARSASQSLNVPSSIKEGQTTGWININSDNDNKRCVSKITFSGHTVNSSDMARLKVIGDD</sequence>
<evidence type="ECO:0000255" key="1">
    <source>
        <dbReference type="HAMAP-Rule" id="MF_01372"/>
    </source>
</evidence>
<keyword id="KW-0732">Signal</keyword>
<organism>
    <name type="scientific">Salmonella paratyphi A (strain ATCC 9150 / SARB42)</name>
    <dbReference type="NCBI Taxonomy" id="295319"/>
    <lineage>
        <taxon>Bacteria</taxon>
        <taxon>Pseudomonadati</taxon>
        <taxon>Pseudomonadota</taxon>
        <taxon>Gammaproteobacteria</taxon>
        <taxon>Enterobacterales</taxon>
        <taxon>Enterobacteriaceae</taxon>
        <taxon>Salmonella</taxon>
    </lineage>
</organism>
<proteinExistence type="inferred from homology"/>
<gene>
    <name evidence="1" type="primary">yaaI</name>
    <name type="ordered locus">SPA0011</name>
</gene>
<name>YAAI_SALPA</name>
<accession>Q5PDM9</accession>
<comment type="similarity">
    <text evidence="1">Belongs to the UPF0412 family.</text>
</comment>
<feature type="signal peptide" evidence="1">
    <location>
        <begin position="1"/>
        <end position="23"/>
    </location>
</feature>
<feature type="chain" id="PRO_0000278587" description="UPF0412 protein YaaI">
    <location>
        <begin position="24"/>
        <end position="134"/>
    </location>
</feature>
<reference key="1">
    <citation type="journal article" date="2004" name="Nat. Genet.">
        <title>Comparison of genome degradation in Paratyphi A and Typhi, human-restricted serovars of Salmonella enterica that cause typhoid.</title>
        <authorList>
            <person name="McClelland M."/>
            <person name="Sanderson K.E."/>
            <person name="Clifton S.W."/>
            <person name="Latreille P."/>
            <person name="Porwollik S."/>
            <person name="Sabo A."/>
            <person name="Meyer R."/>
            <person name="Bieri T."/>
            <person name="Ozersky P."/>
            <person name="McLellan M."/>
            <person name="Harkins C.R."/>
            <person name="Wang C."/>
            <person name="Nguyen C."/>
            <person name="Berghoff A."/>
            <person name="Elliott G."/>
            <person name="Kohlberg S."/>
            <person name="Strong C."/>
            <person name="Du F."/>
            <person name="Carter J."/>
            <person name="Kremizki C."/>
            <person name="Layman D."/>
            <person name="Leonard S."/>
            <person name="Sun H."/>
            <person name="Fulton L."/>
            <person name="Nash W."/>
            <person name="Miner T."/>
            <person name="Minx P."/>
            <person name="Delehaunty K."/>
            <person name="Fronick C."/>
            <person name="Magrini V."/>
            <person name="Nhan M."/>
            <person name="Warren W."/>
            <person name="Florea L."/>
            <person name="Spieth J."/>
            <person name="Wilson R.K."/>
        </authorList>
    </citation>
    <scope>NUCLEOTIDE SEQUENCE [LARGE SCALE GENOMIC DNA]</scope>
    <source>
        <strain>ATCC 9150 / SARB42</strain>
    </source>
</reference>